<name>MINC_PSEAE</name>
<dbReference type="EMBL" id="AE004091">
    <property type="protein sequence ID" value="AAG06631.1"/>
    <property type="molecule type" value="Genomic_DNA"/>
</dbReference>
<dbReference type="PIR" id="E83239">
    <property type="entry name" value="E83239"/>
</dbReference>
<dbReference type="RefSeq" id="NP_251933.1">
    <property type="nucleotide sequence ID" value="NC_002516.2"/>
</dbReference>
<dbReference type="RefSeq" id="WP_003114802.1">
    <property type="nucleotide sequence ID" value="NZ_QZGE01000019.1"/>
</dbReference>
<dbReference type="PDB" id="6RIQ">
    <property type="method" value="EM"/>
    <property type="resolution" value="3.10 A"/>
    <property type="chains" value="A/B/E/F/H/I/L/O/P/S/T=120-263"/>
</dbReference>
<dbReference type="PDBsum" id="6RIQ"/>
<dbReference type="EMDB" id="EMD-4897"/>
<dbReference type="SMR" id="Q9HYZ7"/>
<dbReference type="FunCoup" id="Q9HYZ7">
    <property type="interactions" value="56"/>
</dbReference>
<dbReference type="STRING" id="208964.PA3243"/>
<dbReference type="PaxDb" id="208964-PA3243"/>
<dbReference type="DNASU" id="882406"/>
<dbReference type="GeneID" id="882406"/>
<dbReference type="KEGG" id="pae:PA3243"/>
<dbReference type="PATRIC" id="fig|208964.12.peg.3390"/>
<dbReference type="PseudoCAP" id="PA3243"/>
<dbReference type="HOGENOM" id="CLU_067812_0_1_6"/>
<dbReference type="InParanoid" id="Q9HYZ7"/>
<dbReference type="OrthoDB" id="9794530at2"/>
<dbReference type="PhylomeDB" id="Q9HYZ7"/>
<dbReference type="BioCyc" id="PAER208964:G1FZ6-3302-MONOMER"/>
<dbReference type="Proteomes" id="UP000002438">
    <property type="component" value="Chromosome"/>
</dbReference>
<dbReference type="GO" id="GO:0000902">
    <property type="term" value="P:cell morphogenesis"/>
    <property type="evidence" value="ECO:0007669"/>
    <property type="project" value="InterPro"/>
</dbReference>
<dbReference type="GO" id="GO:0000917">
    <property type="term" value="P:division septum assembly"/>
    <property type="evidence" value="ECO:0007669"/>
    <property type="project" value="UniProtKB-KW"/>
</dbReference>
<dbReference type="GO" id="GO:0051302">
    <property type="term" value="P:regulation of cell division"/>
    <property type="evidence" value="ECO:0007669"/>
    <property type="project" value="InterPro"/>
</dbReference>
<dbReference type="GO" id="GO:1901891">
    <property type="term" value="P:regulation of cell septum assembly"/>
    <property type="evidence" value="ECO:0007669"/>
    <property type="project" value="InterPro"/>
</dbReference>
<dbReference type="Gene3D" id="2.160.20.70">
    <property type="match status" value="1"/>
</dbReference>
<dbReference type="Gene3D" id="3.30.70.260">
    <property type="match status" value="1"/>
</dbReference>
<dbReference type="HAMAP" id="MF_00267">
    <property type="entry name" value="MinC"/>
    <property type="match status" value="1"/>
</dbReference>
<dbReference type="InterPro" id="IPR016098">
    <property type="entry name" value="CAP/MinC_C"/>
</dbReference>
<dbReference type="InterPro" id="IPR013033">
    <property type="entry name" value="MinC"/>
</dbReference>
<dbReference type="InterPro" id="IPR036145">
    <property type="entry name" value="MinC_C_sf"/>
</dbReference>
<dbReference type="InterPro" id="IPR007874">
    <property type="entry name" value="MinC_N"/>
</dbReference>
<dbReference type="InterPro" id="IPR005526">
    <property type="entry name" value="Septum_form_inhib_MinC_C"/>
</dbReference>
<dbReference type="NCBIfam" id="TIGR01222">
    <property type="entry name" value="minC"/>
    <property type="match status" value="1"/>
</dbReference>
<dbReference type="PANTHER" id="PTHR34108">
    <property type="entry name" value="SEPTUM SITE-DETERMINING PROTEIN MINC"/>
    <property type="match status" value="1"/>
</dbReference>
<dbReference type="PANTHER" id="PTHR34108:SF1">
    <property type="entry name" value="SEPTUM SITE-DETERMINING PROTEIN MINC"/>
    <property type="match status" value="1"/>
</dbReference>
<dbReference type="Pfam" id="PF03775">
    <property type="entry name" value="MinC_C"/>
    <property type="match status" value="1"/>
</dbReference>
<dbReference type="Pfam" id="PF05209">
    <property type="entry name" value="MinC_N"/>
    <property type="match status" value="1"/>
</dbReference>
<dbReference type="SUPFAM" id="SSF63848">
    <property type="entry name" value="Cell-division inhibitor MinC, C-terminal domain"/>
    <property type="match status" value="1"/>
</dbReference>
<comment type="function">
    <text evidence="1">Cell division inhibitor that blocks the formation of polar Z ring septums. Rapidly oscillates between the poles of the cell to destabilize FtsZ filaments that have formed before they mature into polar Z rings. Prevents FtsZ polymerization.</text>
</comment>
<comment type="subunit">
    <text evidence="1">Interacts with MinD and FtsZ.</text>
</comment>
<comment type="similarity">
    <text evidence="1">Belongs to the MinC family.</text>
</comment>
<reference key="1">
    <citation type="journal article" date="2000" name="Nature">
        <title>Complete genome sequence of Pseudomonas aeruginosa PAO1, an opportunistic pathogen.</title>
        <authorList>
            <person name="Stover C.K."/>
            <person name="Pham X.-Q.T."/>
            <person name="Erwin A.L."/>
            <person name="Mizoguchi S.D."/>
            <person name="Warrener P."/>
            <person name="Hickey M.J."/>
            <person name="Brinkman F.S.L."/>
            <person name="Hufnagle W.O."/>
            <person name="Kowalik D.J."/>
            <person name="Lagrou M."/>
            <person name="Garber R.L."/>
            <person name="Goltry L."/>
            <person name="Tolentino E."/>
            <person name="Westbrock-Wadman S."/>
            <person name="Yuan Y."/>
            <person name="Brody L.L."/>
            <person name="Coulter S.N."/>
            <person name="Folger K.R."/>
            <person name="Kas A."/>
            <person name="Larbig K."/>
            <person name="Lim R.M."/>
            <person name="Smith K.A."/>
            <person name="Spencer D.H."/>
            <person name="Wong G.K.-S."/>
            <person name="Wu Z."/>
            <person name="Paulsen I.T."/>
            <person name="Reizer J."/>
            <person name="Saier M.H. Jr."/>
            <person name="Hancock R.E.W."/>
            <person name="Lory S."/>
            <person name="Olson M.V."/>
        </authorList>
    </citation>
    <scope>NUCLEOTIDE SEQUENCE [LARGE SCALE GENOMIC DNA]</scope>
    <source>
        <strain>ATCC 15692 / DSM 22644 / CIP 104116 / JCM 14847 / LMG 12228 / 1C / PRS 101 / PAO1</strain>
    </source>
</reference>
<protein>
    <recommendedName>
        <fullName evidence="1">Probable septum site-determining protein MinC</fullName>
    </recommendedName>
</protein>
<evidence type="ECO:0000255" key="1">
    <source>
        <dbReference type="HAMAP-Rule" id="MF_00267"/>
    </source>
</evidence>
<evidence type="ECO:0000256" key="2">
    <source>
        <dbReference type="SAM" id="MobiDB-lite"/>
    </source>
</evidence>
<evidence type="ECO:0007829" key="3">
    <source>
        <dbReference type="PDB" id="6RIQ"/>
    </source>
</evidence>
<accession>Q9HYZ7</accession>
<gene>
    <name evidence="1" type="primary">minC</name>
    <name type="ordered locus">PA3243</name>
</gene>
<sequence>MSQADLLDQDPVFQLKGSMLAVTILELAHNDLARLERQLADKVAQAPNFFRDTPLVMALDKLPEGEGRLDLPALLEVCRRHGLRTLAIRAGREEDIAAAQALDLPVLPPSGARERPLDIKDSAPRKPAEEPSPSAGEARPEPAKAEEKPAEPVSRPTKVVKTPVRGGMQIYAAGGDLIVLAAVSPGAELLADGNIHVYGPMRGRALAGVKGDATARIFCQQLAAELVSIAGNYKVAEDLRRSPQWGKAVHVSLSGDVLNITRL</sequence>
<keyword id="KW-0002">3D-structure</keyword>
<keyword id="KW-0131">Cell cycle</keyword>
<keyword id="KW-0132">Cell division</keyword>
<keyword id="KW-1185">Reference proteome</keyword>
<keyword id="KW-0717">Septation</keyword>
<organism>
    <name type="scientific">Pseudomonas aeruginosa (strain ATCC 15692 / DSM 22644 / CIP 104116 / JCM 14847 / LMG 12228 / 1C / PRS 101 / PAO1)</name>
    <dbReference type="NCBI Taxonomy" id="208964"/>
    <lineage>
        <taxon>Bacteria</taxon>
        <taxon>Pseudomonadati</taxon>
        <taxon>Pseudomonadota</taxon>
        <taxon>Gammaproteobacteria</taxon>
        <taxon>Pseudomonadales</taxon>
        <taxon>Pseudomonadaceae</taxon>
        <taxon>Pseudomonas</taxon>
    </lineage>
</organism>
<proteinExistence type="evidence at protein level"/>
<feature type="chain" id="PRO_0000189054" description="Probable septum site-determining protein MinC">
    <location>
        <begin position="1"/>
        <end position="263"/>
    </location>
</feature>
<feature type="region of interest" description="Disordered" evidence="2">
    <location>
        <begin position="107"/>
        <end position="159"/>
    </location>
</feature>
<feature type="compositionally biased region" description="Basic and acidic residues" evidence="2">
    <location>
        <begin position="112"/>
        <end position="129"/>
    </location>
</feature>
<feature type="compositionally biased region" description="Basic and acidic residues" evidence="2">
    <location>
        <begin position="138"/>
        <end position="150"/>
    </location>
</feature>
<feature type="strand" evidence="3">
    <location>
        <begin position="158"/>
        <end position="160"/>
    </location>
</feature>
<feature type="strand" evidence="3">
    <location>
        <begin position="169"/>
        <end position="175"/>
    </location>
</feature>
<feature type="strand" evidence="3">
    <location>
        <begin position="177"/>
        <end position="179"/>
    </location>
</feature>
<feature type="strand" evidence="3">
    <location>
        <begin position="188"/>
        <end position="193"/>
    </location>
</feature>
<feature type="strand" evidence="3">
    <location>
        <begin position="195"/>
        <end position="201"/>
    </location>
</feature>
<feature type="strand" evidence="3">
    <location>
        <begin position="203"/>
        <end position="208"/>
    </location>
</feature>
<feature type="turn" evidence="3">
    <location>
        <begin position="209"/>
        <end position="211"/>
    </location>
</feature>
<feature type="strand" evidence="3">
    <location>
        <begin position="216"/>
        <end position="222"/>
    </location>
</feature>
<feature type="strand" evidence="3">
    <location>
        <begin position="225"/>
        <end position="229"/>
    </location>
</feature>
<feature type="strand" evidence="3">
    <location>
        <begin position="232"/>
        <end position="235"/>
    </location>
</feature>
<feature type="helix" evidence="3">
    <location>
        <begin position="236"/>
        <end position="241"/>
    </location>
</feature>
<feature type="strand" evidence="3">
    <location>
        <begin position="249"/>
        <end position="254"/>
    </location>
</feature>
<feature type="strand" evidence="3">
    <location>
        <begin position="257"/>
        <end position="261"/>
    </location>
</feature>